<organism>
    <name type="scientific">Xanthobacter autotrophicus (strain ATCC BAA-1158 / Py2)</name>
    <dbReference type="NCBI Taxonomy" id="78245"/>
    <lineage>
        <taxon>Bacteria</taxon>
        <taxon>Pseudomonadati</taxon>
        <taxon>Pseudomonadota</taxon>
        <taxon>Alphaproteobacteria</taxon>
        <taxon>Hyphomicrobiales</taxon>
        <taxon>Xanthobacteraceae</taxon>
        <taxon>Xanthobacter</taxon>
    </lineage>
</organism>
<name>MRAZ_XANP2</name>
<proteinExistence type="inferred from homology"/>
<sequence>MDRFVSTYTMRLDAKGRVSIPAPFRTVLAKDGADGLYCHPSLAEPALDAGGNRLVGEIDALIESYPPYSEAREELAAALYGTSETLRIDPEGRVVLSDTLKAHAAITDQVAFVGLGHKFRIWEPERLKAHLAEATQRVRELRQAIGSRAENPRSTKA</sequence>
<gene>
    <name evidence="1" type="primary">mraZ</name>
    <name type="ordered locus">Xaut_1853</name>
</gene>
<dbReference type="EMBL" id="CP000781">
    <property type="protein sequence ID" value="ABS67098.1"/>
    <property type="molecule type" value="Genomic_DNA"/>
</dbReference>
<dbReference type="SMR" id="A7IGF5"/>
<dbReference type="STRING" id="78245.Xaut_1853"/>
<dbReference type="KEGG" id="xau:Xaut_1853"/>
<dbReference type="eggNOG" id="COG2001">
    <property type="taxonomic scope" value="Bacteria"/>
</dbReference>
<dbReference type="HOGENOM" id="CLU_107907_1_0_5"/>
<dbReference type="OrthoDB" id="9807753at2"/>
<dbReference type="PhylomeDB" id="A7IGF5"/>
<dbReference type="Proteomes" id="UP000002417">
    <property type="component" value="Chromosome"/>
</dbReference>
<dbReference type="GO" id="GO:0005737">
    <property type="term" value="C:cytoplasm"/>
    <property type="evidence" value="ECO:0007669"/>
    <property type="project" value="UniProtKB-UniRule"/>
</dbReference>
<dbReference type="GO" id="GO:0009295">
    <property type="term" value="C:nucleoid"/>
    <property type="evidence" value="ECO:0007669"/>
    <property type="project" value="UniProtKB-SubCell"/>
</dbReference>
<dbReference type="GO" id="GO:0003700">
    <property type="term" value="F:DNA-binding transcription factor activity"/>
    <property type="evidence" value="ECO:0007669"/>
    <property type="project" value="UniProtKB-UniRule"/>
</dbReference>
<dbReference type="GO" id="GO:0000976">
    <property type="term" value="F:transcription cis-regulatory region binding"/>
    <property type="evidence" value="ECO:0007669"/>
    <property type="project" value="TreeGrafter"/>
</dbReference>
<dbReference type="GO" id="GO:2000143">
    <property type="term" value="P:negative regulation of DNA-templated transcription initiation"/>
    <property type="evidence" value="ECO:0007669"/>
    <property type="project" value="TreeGrafter"/>
</dbReference>
<dbReference type="CDD" id="cd16321">
    <property type="entry name" value="MraZ_C"/>
    <property type="match status" value="1"/>
</dbReference>
<dbReference type="CDD" id="cd16320">
    <property type="entry name" value="MraZ_N"/>
    <property type="match status" value="1"/>
</dbReference>
<dbReference type="Gene3D" id="3.40.1550.20">
    <property type="entry name" value="Transcriptional regulator MraZ domain"/>
    <property type="match status" value="1"/>
</dbReference>
<dbReference type="HAMAP" id="MF_01008">
    <property type="entry name" value="MraZ"/>
    <property type="match status" value="1"/>
</dbReference>
<dbReference type="InterPro" id="IPR003444">
    <property type="entry name" value="MraZ"/>
</dbReference>
<dbReference type="InterPro" id="IPR035644">
    <property type="entry name" value="MraZ_C"/>
</dbReference>
<dbReference type="InterPro" id="IPR020603">
    <property type="entry name" value="MraZ_dom"/>
</dbReference>
<dbReference type="InterPro" id="IPR035642">
    <property type="entry name" value="MraZ_N"/>
</dbReference>
<dbReference type="InterPro" id="IPR038619">
    <property type="entry name" value="MraZ_sf"/>
</dbReference>
<dbReference type="InterPro" id="IPR007159">
    <property type="entry name" value="SpoVT-AbrB_dom"/>
</dbReference>
<dbReference type="InterPro" id="IPR037914">
    <property type="entry name" value="SpoVT-AbrB_sf"/>
</dbReference>
<dbReference type="PANTHER" id="PTHR34701">
    <property type="entry name" value="TRANSCRIPTIONAL REGULATOR MRAZ"/>
    <property type="match status" value="1"/>
</dbReference>
<dbReference type="PANTHER" id="PTHR34701:SF1">
    <property type="entry name" value="TRANSCRIPTIONAL REGULATOR MRAZ"/>
    <property type="match status" value="1"/>
</dbReference>
<dbReference type="Pfam" id="PF02381">
    <property type="entry name" value="MraZ"/>
    <property type="match status" value="1"/>
</dbReference>
<dbReference type="SUPFAM" id="SSF89447">
    <property type="entry name" value="AbrB/MazE/MraZ-like"/>
    <property type="match status" value="1"/>
</dbReference>
<dbReference type="PROSITE" id="PS51740">
    <property type="entry name" value="SPOVT_ABRB"/>
    <property type="match status" value="2"/>
</dbReference>
<keyword id="KW-0963">Cytoplasm</keyword>
<keyword id="KW-0238">DNA-binding</keyword>
<keyword id="KW-1185">Reference proteome</keyword>
<keyword id="KW-0677">Repeat</keyword>
<keyword id="KW-0804">Transcription</keyword>
<keyword id="KW-0805">Transcription regulation</keyword>
<comment type="subunit">
    <text evidence="1">Forms oligomers.</text>
</comment>
<comment type="subcellular location">
    <subcellularLocation>
        <location evidence="1">Cytoplasm</location>
        <location evidence="1">Nucleoid</location>
    </subcellularLocation>
</comment>
<comment type="similarity">
    <text evidence="1">Belongs to the MraZ family.</text>
</comment>
<feature type="chain" id="PRO_1000191342" description="Transcriptional regulator MraZ">
    <location>
        <begin position="1"/>
        <end position="157"/>
    </location>
</feature>
<feature type="domain" description="SpoVT-AbrB 1" evidence="2">
    <location>
        <begin position="7"/>
        <end position="52"/>
    </location>
</feature>
<feature type="domain" description="SpoVT-AbrB 2" evidence="2">
    <location>
        <begin position="83"/>
        <end position="126"/>
    </location>
</feature>
<reference key="1">
    <citation type="submission" date="2007-07" db="EMBL/GenBank/DDBJ databases">
        <title>Complete sequence of chromosome of Xanthobacter autotrophicus Py2.</title>
        <authorList>
            <consortium name="US DOE Joint Genome Institute"/>
            <person name="Copeland A."/>
            <person name="Lucas S."/>
            <person name="Lapidus A."/>
            <person name="Barry K."/>
            <person name="Glavina del Rio T."/>
            <person name="Hammon N."/>
            <person name="Israni S."/>
            <person name="Dalin E."/>
            <person name="Tice H."/>
            <person name="Pitluck S."/>
            <person name="Sims D."/>
            <person name="Brettin T."/>
            <person name="Bruce D."/>
            <person name="Detter J.C."/>
            <person name="Han C."/>
            <person name="Tapia R."/>
            <person name="Brainard J."/>
            <person name="Schmutz J."/>
            <person name="Larimer F."/>
            <person name="Land M."/>
            <person name="Hauser L."/>
            <person name="Kyrpides N."/>
            <person name="Kim E."/>
            <person name="Ensigns S.A."/>
            <person name="Richardson P."/>
        </authorList>
    </citation>
    <scope>NUCLEOTIDE SEQUENCE [LARGE SCALE GENOMIC DNA]</scope>
    <source>
        <strain>ATCC BAA-1158 / Py2</strain>
    </source>
</reference>
<protein>
    <recommendedName>
        <fullName>Transcriptional regulator MraZ</fullName>
    </recommendedName>
</protein>
<evidence type="ECO:0000255" key="1">
    <source>
        <dbReference type="HAMAP-Rule" id="MF_01008"/>
    </source>
</evidence>
<evidence type="ECO:0000255" key="2">
    <source>
        <dbReference type="PROSITE-ProRule" id="PRU01076"/>
    </source>
</evidence>
<accession>A7IGF5</accession>